<dbReference type="EC" id="3.1.-.-" evidence="1"/>
<dbReference type="EMBL" id="AACD01000143">
    <property type="protein sequence ID" value="EAA58781.1"/>
    <property type="molecule type" value="Genomic_DNA"/>
</dbReference>
<dbReference type="EMBL" id="BN001302">
    <property type="protein sequence ID" value="CBF74120.1"/>
    <property type="molecule type" value="Genomic_DNA"/>
</dbReference>
<dbReference type="RefSeq" id="XP_681481.1">
    <property type="nucleotide sequence ID" value="XM_676389.1"/>
</dbReference>
<dbReference type="SMR" id="Q5AU18"/>
<dbReference type="FunCoup" id="Q5AU18">
    <property type="interactions" value="410"/>
</dbReference>
<dbReference type="STRING" id="227321.Q5AU18"/>
<dbReference type="EnsemblFungi" id="CBF74120">
    <property type="protein sequence ID" value="CBF74120"/>
    <property type="gene ID" value="ANIA_08212"/>
</dbReference>
<dbReference type="KEGG" id="ani:ANIA_08212"/>
<dbReference type="VEuPathDB" id="FungiDB:AN8212"/>
<dbReference type="eggNOG" id="KOG3005">
    <property type="taxonomic scope" value="Eukaryota"/>
</dbReference>
<dbReference type="HOGENOM" id="CLU_030739_1_1_1"/>
<dbReference type="InParanoid" id="Q5AU18"/>
<dbReference type="OMA" id="HNRGCDF"/>
<dbReference type="OrthoDB" id="24645at2759"/>
<dbReference type="Proteomes" id="UP000000560">
    <property type="component" value="Chromosome II"/>
</dbReference>
<dbReference type="GO" id="GO:0033557">
    <property type="term" value="C:Slx1-Slx4 complex"/>
    <property type="evidence" value="ECO:0000318"/>
    <property type="project" value="GO_Central"/>
</dbReference>
<dbReference type="GO" id="GO:0017108">
    <property type="term" value="F:5'-flap endonuclease activity"/>
    <property type="evidence" value="ECO:0000318"/>
    <property type="project" value="GO_Central"/>
</dbReference>
<dbReference type="GO" id="GO:0008821">
    <property type="term" value="F:crossover junction DNA endonuclease activity"/>
    <property type="evidence" value="ECO:0000318"/>
    <property type="project" value="GO_Central"/>
</dbReference>
<dbReference type="GO" id="GO:0008270">
    <property type="term" value="F:zinc ion binding"/>
    <property type="evidence" value="ECO:0007669"/>
    <property type="project" value="UniProtKB-KW"/>
</dbReference>
<dbReference type="GO" id="GO:0000724">
    <property type="term" value="P:double-strand break repair via homologous recombination"/>
    <property type="evidence" value="ECO:0000318"/>
    <property type="project" value="GO_Central"/>
</dbReference>
<dbReference type="CDD" id="cd10455">
    <property type="entry name" value="GIY-YIG_SLX1"/>
    <property type="match status" value="1"/>
</dbReference>
<dbReference type="FunFam" id="3.30.40.10:FF:001101">
    <property type="entry name" value="Structure-specific endonuclease subunit slx1"/>
    <property type="match status" value="1"/>
</dbReference>
<dbReference type="Gene3D" id="3.40.1440.10">
    <property type="entry name" value="GIY-YIG endonuclease"/>
    <property type="match status" value="1"/>
</dbReference>
<dbReference type="Gene3D" id="3.30.40.10">
    <property type="entry name" value="Zinc/RING finger domain, C3HC4 (zinc finger)"/>
    <property type="match status" value="1"/>
</dbReference>
<dbReference type="HAMAP" id="MF_03100">
    <property type="entry name" value="Endonuc_su_Slx1"/>
    <property type="match status" value="1"/>
</dbReference>
<dbReference type="InterPro" id="IPR000305">
    <property type="entry name" value="GIY-YIG_endonuc"/>
</dbReference>
<dbReference type="InterPro" id="IPR035901">
    <property type="entry name" value="GIY-YIG_endonuc_sf"/>
</dbReference>
<dbReference type="InterPro" id="IPR027520">
    <property type="entry name" value="Slx1"/>
</dbReference>
<dbReference type="InterPro" id="IPR048749">
    <property type="entry name" value="SLX1_C"/>
</dbReference>
<dbReference type="InterPro" id="IPR050381">
    <property type="entry name" value="SLX1_endonuclease"/>
</dbReference>
<dbReference type="InterPro" id="IPR013083">
    <property type="entry name" value="Znf_RING/FYVE/PHD"/>
</dbReference>
<dbReference type="PANTHER" id="PTHR20208">
    <property type="entry name" value="STRUCTURE-SPECIFIC ENDONUCLEASE SUBUNIT SLX1"/>
    <property type="match status" value="1"/>
</dbReference>
<dbReference type="PANTHER" id="PTHR20208:SF10">
    <property type="entry name" value="STRUCTURE-SPECIFIC ENDONUCLEASE SUBUNIT SLX1"/>
    <property type="match status" value="1"/>
</dbReference>
<dbReference type="Pfam" id="PF01541">
    <property type="entry name" value="GIY-YIG"/>
    <property type="match status" value="1"/>
</dbReference>
<dbReference type="Pfam" id="PF21202">
    <property type="entry name" value="SLX1_C"/>
    <property type="match status" value="1"/>
</dbReference>
<dbReference type="PROSITE" id="PS50164">
    <property type="entry name" value="GIY_YIG"/>
    <property type="match status" value="1"/>
</dbReference>
<organism>
    <name type="scientific">Emericella nidulans (strain FGSC A4 / ATCC 38163 / CBS 112.46 / NRRL 194 / M139)</name>
    <name type="common">Aspergillus nidulans</name>
    <dbReference type="NCBI Taxonomy" id="227321"/>
    <lineage>
        <taxon>Eukaryota</taxon>
        <taxon>Fungi</taxon>
        <taxon>Dikarya</taxon>
        <taxon>Ascomycota</taxon>
        <taxon>Pezizomycotina</taxon>
        <taxon>Eurotiomycetes</taxon>
        <taxon>Eurotiomycetidae</taxon>
        <taxon>Eurotiales</taxon>
        <taxon>Aspergillaceae</taxon>
        <taxon>Aspergillus</taxon>
        <taxon>Aspergillus subgen. Nidulantes</taxon>
    </lineage>
</organism>
<gene>
    <name type="primary">slx1</name>
    <name type="ORF">AN8212</name>
</gene>
<protein>
    <recommendedName>
        <fullName evidence="1">Structure-specific endonuclease subunit slx1</fullName>
        <ecNumber evidence="1">3.1.-.-</ecNumber>
    </recommendedName>
</protein>
<comment type="function">
    <text evidence="1">Catalytic subunit of the slx1-slx4 structure-specific endonuclease that resolves DNA secondary structures generated during DNA repair and recombination. Has endonuclease activity towards branched DNA substrates, introducing single-strand cuts in duplex DNA close to junctions with ss-DNA.</text>
</comment>
<comment type="cofactor">
    <cofactor evidence="1">
        <name>a divalent metal cation</name>
        <dbReference type="ChEBI" id="CHEBI:60240"/>
    </cofactor>
</comment>
<comment type="subunit">
    <text evidence="1">Forms a heterodimer with slx4.</text>
</comment>
<comment type="subcellular location">
    <subcellularLocation>
        <location evidence="1">Nucleus</location>
    </subcellularLocation>
</comment>
<comment type="similarity">
    <text evidence="1">Belongs to the SLX1 family.</text>
</comment>
<reference key="1">
    <citation type="journal article" date="2005" name="Nature">
        <title>Sequencing of Aspergillus nidulans and comparative analysis with A. fumigatus and A. oryzae.</title>
        <authorList>
            <person name="Galagan J.E."/>
            <person name="Calvo S.E."/>
            <person name="Cuomo C."/>
            <person name="Ma L.-J."/>
            <person name="Wortman J.R."/>
            <person name="Batzoglou S."/>
            <person name="Lee S.-I."/>
            <person name="Bastuerkmen M."/>
            <person name="Spevak C.C."/>
            <person name="Clutterbuck J."/>
            <person name="Kapitonov V."/>
            <person name="Jurka J."/>
            <person name="Scazzocchio C."/>
            <person name="Farman M.L."/>
            <person name="Butler J."/>
            <person name="Purcell S."/>
            <person name="Harris S."/>
            <person name="Braus G.H."/>
            <person name="Draht O."/>
            <person name="Busch S."/>
            <person name="D'Enfert C."/>
            <person name="Bouchier C."/>
            <person name="Goldman G.H."/>
            <person name="Bell-Pedersen D."/>
            <person name="Griffiths-Jones S."/>
            <person name="Doonan J.H."/>
            <person name="Yu J."/>
            <person name="Vienken K."/>
            <person name="Pain A."/>
            <person name="Freitag M."/>
            <person name="Selker E.U."/>
            <person name="Archer D.B."/>
            <person name="Penalva M.A."/>
            <person name="Oakley B.R."/>
            <person name="Momany M."/>
            <person name="Tanaka T."/>
            <person name="Kumagai T."/>
            <person name="Asai K."/>
            <person name="Machida M."/>
            <person name="Nierman W.C."/>
            <person name="Denning D.W."/>
            <person name="Caddick M.X."/>
            <person name="Hynes M."/>
            <person name="Paoletti M."/>
            <person name="Fischer R."/>
            <person name="Miller B.L."/>
            <person name="Dyer P.S."/>
            <person name="Sachs M.S."/>
            <person name="Osmani S.A."/>
            <person name="Birren B.W."/>
        </authorList>
    </citation>
    <scope>NUCLEOTIDE SEQUENCE [LARGE SCALE GENOMIC DNA]</scope>
    <source>
        <strain>FGSC A4 / ATCC 38163 / CBS 112.46 / NRRL 194 / M139</strain>
    </source>
</reference>
<reference key="2">
    <citation type="journal article" date="2009" name="Fungal Genet. Biol.">
        <title>The 2008 update of the Aspergillus nidulans genome annotation: a community effort.</title>
        <authorList>
            <person name="Wortman J.R."/>
            <person name="Gilsenan J.M."/>
            <person name="Joardar V."/>
            <person name="Deegan J."/>
            <person name="Clutterbuck J."/>
            <person name="Andersen M.R."/>
            <person name="Archer D."/>
            <person name="Bencina M."/>
            <person name="Braus G."/>
            <person name="Coutinho P."/>
            <person name="von Dohren H."/>
            <person name="Doonan J."/>
            <person name="Driessen A.J."/>
            <person name="Durek P."/>
            <person name="Espeso E."/>
            <person name="Fekete E."/>
            <person name="Flipphi M."/>
            <person name="Estrada C.G."/>
            <person name="Geysens S."/>
            <person name="Goldman G."/>
            <person name="de Groot P.W."/>
            <person name="Hansen K."/>
            <person name="Harris S.D."/>
            <person name="Heinekamp T."/>
            <person name="Helmstaedt K."/>
            <person name="Henrissat B."/>
            <person name="Hofmann G."/>
            <person name="Homan T."/>
            <person name="Horio T."/>
            <person name="Horiuchi H."/>
            <person name="James S."/>
            <person name="Jones M."/>
            <person name="Karaffa L."/>
            <person name="Karanyi Z."/>
            <person name="Kato M."/>
            <person name="Keller N."/>
            <person name="Kelly D.E."/>
            <person name="Kiel J.A."/>
            <person name="Kim J.M."/>
            <person name="van der Klei I.J."/>
            <person name="Klis F.M."/>
            <person name="Kovalchuk A."/>
            <person name="Krasevec N."/>
            <person name="Kubicek C.P."/>
            <person name="Liu B."/>
            <person name="Maccabe A."/>
            <person name="Meyer V."/>
            <person name="Mirabito P."/>
            <person name="Miskei M."/>
            <person name="Mos M."/>
            <person name="Mullins J."/>
            <person name="Nelson D.R."/>
            <person name="Nielsen J."/>
            <person name="Oakley B.R."/>
            <person name="Osmani S.A."/>
            <person name="Pakula T."/>
            <person name="Paszewski A."/>
            <person name="Paulsen I."/>
            <person name="Pilsyk S."/>
            <person name="Pocsi I."/>
            <person name="Punt P.J."/>
            <person name="Ram A.F."/>
            <person name="Ren Q."/>
            <person name="Robellet X."/>
            <person name="Robson G."/>
            <person name="Seiboth B."/>
            <person name="van Solingen P."/>
            <person name="Specht T."/>
            <person name="Sun J."/>
            <person name="Taheri-Talesh N."/>
            <person name="Takeshita N."/>
            <person name="Ussery D."/>
            <person name="vanKuyk P.A."/>
            <person name="Visser H."/>
            <person name="van de Vondervoort P.J."/>
            <person name="de Vries R.P."/>
            <person name="Walton J."/>
            <person name="Xiang X."/>
            <person name="Xiong Y."/>
            <person name="Zeng A.P."/>
            <person name="Brandt B.W."/>
            <person name="Cornell M.J."/>
            <person name="van den Hondel C.A."/>
            <person name="Visser J."/>
            <person name="Oliver S.G."/>
            <person name="Turner G."/>
        </authorList>
    </citation>
    <scope>GENOME REANNOTATION</scope>
    <source>
        <strain>FGSC A4 / ATCC 38163 / CBS 112.46 / NRRL 194 / M139</strain>
    </source>
</reference>
<feature type="chain" id="PRO_0000383784" description="Structure-specific endonuclease subunit slx1">
    <location>
        <begin position="1"/>
        <end position="409"/>
    </location>
</feature>
<feature type="domain" description="GIY-YIG" evidence="1">
    <location>
        <begin position="1"/>
        <end position="76"/>
    </location>
</feature>
<feature type="zinc finger region" description="SLX1-type" evidence="1">
    <location>
        <begin position="239"/>
        <end position="293"/>
    </location>
</feature>
<feature type="region of interest" description="Disordered" evidence="2">
    <location>
        <begin position="76"/>
        <end position="135"/>
    </location>
</feature>
<feature type="region of interest" description="Disordered" evidence="2">
    <location>
        <begin position="325"/>
        <end position="345"/>
    </location>
</feature>
<feature type="compositionally biased region" description="Basic and acidic residues" evidence="2">
    <location>
        <begin position="80"/>
        <end position="90"/>
    </location>
</feature>
<feature type="compositionally biased region" description="Basic and acidic residues" evidence="2">
    <location>
        <begin position="106"/>
        <end position="121"/>
    </location>
</feature>
<feature type="compositionally biased region" description="Basic residues" evidence="2">
    <location>
        <begin position="122"/>
        <end position="135"/>
    </location>
</feature>
<sequence>MGTGYRTQALYIGSTPDPARRLAQHNGLCKGGARRTADEKRRPWEMVMVVEGFMSKIAALQFEWAWQHPAATRHLTADAPSKEQSKTHEGIEDDDAVKKPQQKTKGLTDSRATGEREDDGKKKTKRKPPARRTRTSLKAHLEDLHLLLRSTYFKEWPLSLRFFAADVSQQWRWLCGRVNESIPTHIKMVADGNCADTSPQCDHSLGVGSVREIGVDYTPIRDYLEKATFLLDDMRGSYCKICKEQYVDNDWAVVCPEADCTSTTHLLCLSRTFLDATEDPERLVPLTGKCPTCAQTVQWPLMMKELSIRTRGGRLLHNMLKKGGKRTRTIQKAQDATAESDDNASAADIAVDASHEDSDDTDSLIDYWDRILGSDSESGASIHSQYGSKASGTEVNIEKNVFLDNGLLD</sequence>
<accession>Q5AU18</accession>
<accession>C8V777</accession>
<name>SLX1_EMENI</name>
<evidence type="ECO:0000255" key="1">
    <source>
        <dbReference type="HAMAP-Rule" id="MF_03100"/>
    </source>
</evidence>
<evidence type="ECO:0000256" key="2">
    <source>
        <dbReference type="SAM" id="MobiDB-lite"/>
    </source>
</evidence>
<proteinExistence type="inferred from homology"/>
<keyword id="KW-0227">DNA damage</keyword>
<keyword id="KW-0233">DNA recombination</keyword>
<keyword id="KW-0234">DNA repair</keyword>
<keyword id="KW-0255">Endonuclease</keyword>
<keyword id="KW-0378">Hydrolase</keyword>
<keyword id="KW-0479">Metal-binding</keyword>
<keyword id="KW-0540">Nuclease</keyword>
<keyword id="KW-0539">Nucleus</keyword>
<keyword id="KW-1185">Reference proteome</keyword>
<keyword id="KW-0862">Zinc</keyword>
<keyword id="KW-0863">Zinc-finger</keyword>